<evidence type="ECO:0000255" key="1">
    <source>
        <dbReference type="HAMAP-Rule" id="MF_00320"/>
    </source>
</evidence>
<comment type="function">
    <text evidence="1">DNA-dependent RNA polymerase (RNAP) catalyzes the transcription of DNA into RNA using the four ribonucleoside triphosphates as substrates.</text>
</comment>
<comment type="catalytic activity">
    <reaction evidence="1">
        <text>RNA(n) + a ribonucleoside 5'-triphosphate = RNA(n+1) + diphosphate</text>
        <dbReference type="Rhea" id="RHEA:21248"/>
        <dbReference type="Rhea" id="RHEA-COMP:14527"/>
        <dbReference type="Rhea" id="RHEA-COMP:17342"/>
        <dbReference type="ChEBI" id="CHEBI:33019"/>
        <dbReference type="ChEBI" id="CHEBI:61557"/>
        <dbReference type="ChEBI" id="CHEBI:140395"/>
        <dbReference type="EC" id="2.7.7.6"/>
    </reaction>
</comment>
<comment type="subunit">
    <text evidence="1">Part of the RNA polymerase complex.</text>
</comment>
<comment type="subcellular location">
    <subcellularLocation>
        <location evidence="1">Cytoplasm</location>
    </subcellularLocation>
</comment>
<comment type="similarity">
    <text evidence="1">Belongs to the archaeal Rpo3/eukaryotic RPB3 RNA polymerase subunit family.</text>
</comment>
<keyword id="KW-0963">Cytoplasm</keyword>
<keyword id="KW-0240">DNA-directed RNA polymerase</keyword>
<keyword id="KW-0548">Nucleotidyltransferase</keyword>
<keyword id="KW-0804">Transcription</keyword>
<keyword id="KW-0808">Transferase</keyword>
<protein>
    <recommendedName>
        <fullName evidence="1">DNA-directed RNA polymerase subunit Rpo3</fullName>
        <ecNumber evidence="1">2.7.7.6</ecNumber>
    </recommendedName>
    <alternativeName>
        <fullName evidence="1">DNA-directed RNA polymerase subunit D</fullName>
    </alternativeName>
</protein>
<name>RPO3_PYRNV</name>
<accession>B1YC30</accession>
<sequence>MPAVKVVERTPLFLKAVVEGAYPSLVNSLRRVIISELPVMAIDTVIVVNNTSVMYDEMLAHRLGLIPLTTPLQSLPPIEDCESGLADPSECTVRFTLQVNADGEVTVYSGDLVSERPDVVPVHKDIPIVKLVKGQSIVLEAYAKLGRARGHAKWQAALASYYYYPRVEVRDESCRERCREVCRDLTNPLECTFNKAMTCRDLCGDKLHVDWERNKYVFWVESFGNYDVDTALREAFRILKRKYSLFLDALARKSSSAAEAKL</sequence>
<reference key="1">
    <citation type="submission" date="2008-03" db="EMBL/GenBank/DDBJ databases">
        <title>Complete sequence of Thermoproteus neutrophilus V24Sta.</title>
        <authorList>
            <consortium name="US DOE Joint Genome Institute"/>
            <person name="Copeland A."/>
            <person name="Lucas S."/>
            <person name="Lapidus A."/>
            <person name="Glavina del Rio T."/>
            <person name="Dalin E."/>
            <person name="Tice H."/>
            <person name="Bruce D."/>
            <person name="Goodwin L."/>
            <person name="Pitluck S."/>
            <person name="Sims D."/>
            <person name="Brettin T."/>
            <person name="Detter J.C."/>
            <person name="Han C."/>
            <person name="Kuske C.R."/>
            <person name="Schmutz J."/>
            <person name="Larimer F."/>
            <person name="Land M."/>
            <person name="Hauser L."/>
            <person name="Kyrpides N."/>
            <person name="Mikhailova N."/>
            <person name="Biddle J.F."/>
            <person name="Zhang Z."/>
            <person name="Fitz-Gibbon S.T."/>
            <person name="Lowe T.M."/>
            <person name="Saltikov C."/>
            <person name="House C.H."/>
            <person name="Richardson P."/>
        </authorList>
    </citation>
    <scope>NUCLEOTIDE SEQUENCE [LARGE SCALE GENOMIC DNA]</scope>
    <source>
        <strain>DSM 2338 / JCM 9278 / NBRC 100436 / V24Sta</strain>
    </source>
</reference>
<organism>
    <name type="scientific">Pyrobaculum neutrophilum (strain DSM 2338 / JCM 9278 / NBRC 100436 / V24Sta)</name>
    <name type="common">Thermoproteus neutrophilus</name>
    <dbReference type="NCBI Taxonomy" id="444157"/>
    <lineage>
        <taxon>Archaea</taxon>
        <taxon>Thermoproteota</taxon>
        <taxon>Thermoprotei</taxon>
        <taxon>Thermoproteales</taxon>
        <taxon>Thermoproteaceae</taxon>
        <taxon>Pyrobaculum</taxon>
    </lineage>
</organism>
<gene>
    <name evidence="1" type="primary">rpo3</name>
    <name evidence="1" type="synonym">rpoD</name>
    <name type="ordered locus">Tneu_1969</name>
</gene>
<feature type="chain" id="PRO_1000115948" description="DNA-directed RNA polymerase subunit Rpo3">
    <location>
        <begin position="1"/>
        <end position="262"/>
    </location>
</feature>
<proteinExistence type="inferred from homology"/>
<dbReference type="EC" id="2.7.7.6" evidence="1"/>
<dbReference type="EMBL" id="CP001014">
    <property type="protein sequence ID" value="ACB40884.1"/>
    <property type="molecule type" value="Genomic_DNA"/>
</dbReference>
<dbReference type="RefSeq" id="WP_012351303.1">
    <property type="nucleotide sequence ID" value="NC_010525.1"/>
</dbReference>
<dbReference type="SMR" id="B1YC30"/>
<dbReference type="STRING" id="444157.Tneu_1969"/>
<dbReference type="GeneID" id="6164675"/>
<dbReference type="KEGG" id="tne:Tneu_1969"/>
<dbReference type="eggNOG" id="arCOG04241">
    <property type="taxonomic scope" value="Archaea"/>
</dbReference>
<dbReference type="HOGENOM" id="CLU_038421_3_1_2"/>
<dbReference type="OrthoDB" id="84933at2157"/>
<dbReference type="Proteomes" id="UP000001694">
    <property type="component" value="Chromosome"/>
</dbReference>
<dbReference type="GO" id="GO:0005737">
    <property type="term" value="C:cytoplasm"/>
    <property type="evidence" value="ECO:0007669"/>
    <property type="project" value="UniProtKB-SubCell"/>
</dbReference>
<dbReference type="GO" id="GO:0000428">
    <property type="term" value="C:DNA-directed RNA polymerase complex"/>
    <property type="evidence" value="ECO:0007669"/>
    <property type="project" value="UniProtKB-KW"/>
</dbReference>
<dbReference type="GO" id="GO:0003677">
    <property type="term" value="F:DNA binding"/>
    <property type="evidence" value="ECO:0007669"/>
    <property type="project" value="UniProtKB-UniRule"/>
</dbReference>
<dbReference type="GO" id="GO:0003899">
    <property type="term" value="F:DNA-directed RNA polymerase activity"/>
    <property type="evidence" value="ECO:0007669"/>
    <property type="project" value="UniProtKB-UniRule"/>
</dbReference>
<dbReference type="GO" id="GO:0046983">
    <property type="term" value="F:protein dimerization activity"/>
    <property type="evidence" value="ECO:0007669"/>
    <property type="project" value="InterPro"/>
</dbReference>
<dbReference type="GO" id="GO:0006351">
    <property type="term" value="P:DNA-templated transcription"/>
    <property type="evidence" value="ECO:0007669"/>
    <property type="project" value="UniProtKB-UniRule"/>
</dbReference>
<dbReference type="CDD" id="cd07030">
    <property type="entry name" value="RNAP_D"/>
    <property type="match status" value="1"/>
</dbReference>
<dbReference type="Gene3D" id="3.30.70.3110">
    <property type="match status" value="1"/>
</dbReference>
<dbReference type="Gene3D" id="2.170.120.12">
    <property type="entry name" value="DNA-directed RNA polymerase, insert domain"/>
    <property type="match status" value="1"/>
</dbReference>
<dbReference type="Gene3D" id="3.30.1360.10">
    <property type="entry name" value="RNA polymerase, RBP11-like subunit"/>
    <property type="match status" value="1"/>
</dbReference>
<dbReference type="HAMAP" id="MF_00320">
    <property type="entry name" value="RNApol_arch_Rpo3"/>
    <property type="match status" value="1"/>
</dbReference>
<dbReference type="InterPro" id="IPR001514">
    <property type="entry name" value="DNA-dir_RNA_pol_30-40kDasu_CS"/>
</dbReference>
<dbReference type="InterPro" id="IPR011262">
    <property type="entry name" value="DNA-dir_RNA_pol_insert"/>
</dbReference>
<dbReference type="InterPro" id="IPR011263">
    <property type="entry name" value="DNA-dir_RNA_pol_RpoA/D/Rpb3"/>
</dbReference>
<dbReference type="InterPro" id="IPR036603">
    <property type="entry name" value="RBP11-like"/>
</dbReference>
<dbReference type="InterPro" id="IPR022842">
    <property type="entry name" value="RNAP_Rpo3/Rpb3/RPAC1"/>
</dbReference>
<dbReference type="InterPro" id="IPR036643">
    <property type="entry name" value="RNApol_insert_sf"/>
</dbReference>
<dbReference type="InterPro" id="IPR050518">
    <property type="entry name" value="Rpo3/RPB3_RNA_Pol_subunit"/>
</dbReference>
<dbReference type="NCBIfam" id="NF001988">
    <property type="entry name" value="PRK00783.1"/>
    <property type="match status" value="1"/>
</dbReference>
<dbReference type="PANTHER" id="PTHR11800">
    <property type="entry name" value="DNA-DIRECTED RNA POLYMERASE"/>
    <property type="match status" value="1"/>
</dbReference>
<dbReference type="PANTHER" id="PTHR11800:SF2">
    <property type="entry name" value="DNA-DIRECTED RNA POLYMERASE II SUBUNIT RPB3"/>
    <property type="match status" value="1"/>
</dbReference>
<dbReference type="Pfam" id="PF01000">
    <property type="entry name" value="RNA_pol_A_bac"/>
    <property type="match status" value="1"/>
</dbReference>
<dbReference type="Pfam" id="PF01193">
    <property type="entry name" value="RNA_pol_L"/>
    <property type="match status" value="1"/>
</dbReference>
<dbReference type="SMART" id="SM00662">
    <property type="entry name" value="RPOLD"/>
    <property type="match status" value="1"/>
</dbReference>
<dbReference type="SUPFAM" id="SSF56553">
    <property type="entry name" value="Insert subdomain of RNA polymerase alpha subunit"/>
    <property type="match status" value="1"/>
</dbReference>
<dbReference type="SUPFAM" id="SSF55257">
    <property type="entry name" value="RBP11-like subunits of RNA polymerase"/>
    <property type="match status" value="1"/>
</dbReference>
<dbReference type="PROSITE" id="PS00446">
    <property type="entry name" value="RNA_POL_D_30KD"/>
    <property type="match status" value="1"/>
</dbReference>